<keyword id="KW-1185">Reference proteome</keyword>
<keyword id="KW-0687">Ribonucleoprotein</keyword>
<keyword id="KW-0689">Ribosomal protein</keyword>
<evidence type="ECO:0000256" key="1">
    <source>
        <dbReference type="SAM" id="MobiDB-lite"/>
    </source>
</evidence>
<evidence type="ECO:0000305" key="2"/>
<protein>
    <recommendedName>
        <fullName evidence="2">Small ribosomal subunit protein eS8</fullName>
    </recommendedName>
    <alternativeName>
        <fullName>40S ribosomal protein S8</fullName>
    </alternativeName>
</protein>
<proteinExistence type="inferred from homology"/>
<sequence length="188" mass="21435">MGISRDSRHKRRLTGGRYPVHKKKRKYELGRPSSNTKLGSKLVRKVRCRGGNLKFRALRLDSGNFSWGSQNVTRKTRVMDVVYNASSNELVRTKTLVKNAIVTVDPTPFKLWFKTHYGLELGKSSEDPQASEKVAALVPRTLLDQFSSGRLLACISSRPGQCGRCDGYVLEGEELNFYRRRMDKKKRV</sequence>
<accession>Q4N3P0</accession>
<gene>
    <name type="primary">RPS8</name>
    <name type="ordered locus">TP02_0949</name>
</gene>
<organism>
    <name type="scientific">Theileria parva</name>
    <name type="common">East coast fever infection agent</name>
    <dbReference type="NCBI Taxonomy" id="5875"/>
    <lineage>
        <taxon>Eukaryota</taxon>
        <taxon>Sar</taxon>
        <taxon>Alveolata</taxon>
        <taxon>Apicomplexa</taxon>
        <taxon>Aconoidasida</taxon>
        <taxon>Piroplasmida</taxon>
        <taxon>Theileriidae</taxon>
        <taxon>Theileria</taxon>
    </lineage>
</organism>
<reference key="1">
    <citation type="journal article" date="2005" name="Science">
        <title>Genome sequence of Theileria parva, a bovine pathogen that transforms lymphocytes.</title>
        <authorList>
            <person name="Gardner M.J."/>
            <person name="Bishop R."/>
            <person name="Shah T."/>
            <person name="de Villiers E.P."/>
            <person name="Carlton J.M."/>
            <person name="Hall N."/>
            <person name="Ren Q."/>
            <person name="Paulsen I.T."/>
            <person name="Pain A."/>
            <person name="Berriman M."/>
            <person name="Wilson R.J.M."/>
            <person name="Sato S."/>
            <person name="Ralph S.A."/>
            <person name="Mann D.J."/>
            <person name="Xiong Z."/>
            <person name="Shallom S.J."/>
            <person name="Weidman J."/>
            <person name="Jiang L."/>
            <person name="Lynn J."/>
            <person name="Weaver B."/>
            <person name="Shoaibi A."/>
            <person name="Domingo A.R."/>
            <person name="Wasawo D."/>
            <person name="Crabtree J."/>
            <person name="Wortman J.R."/>
            <person name="Haas B."/>
            <person name="Angiuoli S.V."/>
            <person name="Creasy T.H."/>
            <person name="Lu C."/>
            <person name="Suh B."/>
            <person name="Silva J.C."/>
            <person name="Utterback T.R."/>
            <person name="Feldblyum T.V."/>
            <person name="Pertea M."/>
            <person name="Allen J."/>
            <person name="Nierman W.C."/>
            <person name="Taracha E.L.N."/>
            <person name="Salzberg S.L."/>
            <person name="White O.R."/>
            <person name="Fitzhugh H.A."/>
            <person name="Morzaria S."/>
            <person name="Venter J.C."/>
            <person name="Fraser C.M."/>
            <person name="Nene V."/>
        </authorList>
    </citation>
    <scope>NUCLEOTIDE SEQUENCE [LARGE SCALE GENOMIC DNA]</scope>
    <source>
        <strain>Muguga</strain>
    </source>
</reference>
<name>RS8_THEPA</name>
<feature type="chain" id="PRO_0000232708" description="Small ribosomal subunit protein eS8">
    <location>
        <begin position="1"/>
        <end position="188"/>
    </location>
</feature>
<feature type="region of interest" description="Disordered" evidence="1">
    <location>
        <begin position="1"/>
        <end position="34"/>
    </location>
</feature>
<feature type="compositionally biased region" description="Basic residues" evidence="1">
    <location>
        <begin position="7"/>
        <end position="26"/>
    </location>
</feature>
<dbReference type="EMBL" id="AAGK01000002">
    <property type="protein sequence ID" value="EAN33233.1"/>
    <property type="molecule type" value="Genomic_DNA"/>
</dbReference>
<dbReference type="RefSeq" id="XP_765516.1">
    <property type="nucleotide sequence ID" value="XM_760423.1"/>
</dbReference>
<dbReference type="SMR" id="Q4N3P0"/>
<dbReference type="FunCoup" id="Q4N3P0">
    <property type="interactions" value="317"/>
</dbReference>
<dbReference type="STRING" id="5875.Q4N3P0"/>
<dbReference type="EnsemblProtists" id="EAN33233">
    <property type="protein sequence ID" value="EAN33233"/>
    <property type="gene ID" value="TP02_0949"/>
</dbReference>
<dbReference type="GeneID" id="3501709"/>
<dbReference type="KEGG" id="tpv:TP02_0949"/>
<dbReference type="VEuPathDB" id="PiroplasmaDB:TpMuguga_02g00949"/>
<dbReference type="eggNOG" id="KOG3283">
    <property type="taxonomic scope" value="Eukaryota"/>
</dbReference>
<dbReference type="InParanoid" id="Q4N3P0"/>
<dbReference type="OMA" id="QRPHYRK"/>
<dbReference type="Proteomes" id="UP000001949">
    <property type="component" value="Unassembled WGS sequence"/>
</dbReference>
<dbReference type="GO" id="GO:1990904">
    <property type="term" value="C:ribonucleoprotein complex"/>
    <property type="evidence" value="ECO:0007669"/>
    <property type="project" value="UniProtKB-KW"/>
</dbReference>
<dbReference type="GO" id="GO:0005840">
    <property type="term" value="C:ribosome"/>
    <property type="evidence" value="ECO:0007669"/>
    <property type="project" value="UniProtKB-KW"/>
</dbReference>
<dbReference type="GO" id="GO:0003735">
    <property type="term" value="F:structural constituent of ribosome"/>
    <property type="evidence" value="ECO:0007669"/>
    <property type="project" value="InterPro"/>
</dbReference>
<dbReference type="GO" id="GO:0006412">
    <property type="term" value="P:translation"/>
    <property type="evidence" value="ECO:0007669"/>
    <property type="project" value="InterPro"/>
</dbReference>
<dbReference type="CDD" id="cd11380">
    <property type="entry name" value="Ribosomal_S8e_like"/>
    <property type="match status" value="1"/>
</dbReference>
<dbReference type="Gene3D" id="3.10.290.70">
    <property type="match status" value="1"/>
</dbReference>
<dbReference type="Gene3D" id="1.10.168.20">
    <property type="entry name" value="Ribosomal protein S8e, subdomain"/>
    <property type="match status" value="1"/>
</dbReference>
<dbReference type="InterPro" id="IPR001047">
    <property type="entry name" value="Ribosomal_eS8"/>
</dbReference>
<dbReference type="InterPro" id="IPR018283">
    <property type="entry name" value="Ribosomal_eS8_CS"/>
</dbReference>
<dbReference type="InterPro" id="IPR042563">
    <property type="entry name" value="Ribosomal_protein_eS8_euk"/>
</dbReference>
<dbReference type="InterPro" id="IPR022309">
    <property type="entry name" value="Ribosomal_Se8/biogenesis_NSA2"/>
</dbReference>
<dbReference type="NCBIfam" id="TIGR00307">
    <property type="entry name" value="eS8"/>
    <property type="match status" value="1"/>
</dbReference>
<dbReference type="PANTHER" id="PTHR10394">
    <property type="entry name" value="40S RIBOSOMAL PROTEIN S8"/>
    <property type="match status" value="1"/>
</dbReference>
<dbReference type="Pfam" id="PF01201">
    <property type="entry name" value="Ribosomal_S8e"/>
    <property type="match status" value="1"/>
</dbReference>
<dbReference type="PROSITE" id="PS01193">
    <property type="entry name" value="RIBOSOMAL_S8E"/>
    <property type="match status" value="1"/>
</dbReference>
<comment type="similarity">
    <text evidence="2">Belongs to the eukaryotic ribosomal protein eS8 family.</text>
</comment>